<reference key="1">
    <citation type="journal article" date="1999" name="Mol. Plant Microbe Interact.">
        <title>Mutation in GDP-fucose synthesis genes of Sinorhizobium fredii alters Nod factors and significantly decreases competitiveness to nodulate soybeans.</title>
        <authorList>
            <person name="Lamrabet Y."/>
            <person name="Bellogin R.A."/>
            <person name="Cubo T."/>
            <person name="Espuny R."/>
            <person name="Gil A."/>
            <person name="Krishnan H.B."/>
            <person name="Megias M."/>
            <person name="Ollero F.J."/>
            <person name="Pueppke S.G."/>
            <person name="Ruiz-Sainz J.E."/>
            <person name="Spaink H.P."/>
            <person name="Tejero-Mateo P."/>
            <person name="Thomas-Oates J."/>
            <person name="Vinardell J.M."/>
        </authorList>
    </citation>
    <scope>NUCLEOTIDE SEQUENCE [GENOMIC DNA]</scope>
    <source>
        <strain>HH103</strain>
    </source>
</reference>
<reference key="2">
    <citation type="journal article" date="2012" name="J. Bacteriol.">
        <title>Genome sequence of the soybean symbiont Sinorhizobium fredii HH103.</title>
        <authorList>
            <person name="Weidner S."/>
            <person name="Becker A."/>
            <person name="Bonilla I."/>
            <person name="Jaenicke S."/>
            <person name="Lloret J."/>
            <person name="Margaret I."/>
            <person name="Puhler A."/>
            <person name="Ruiz-Sainz J.E."/>
            <person name="Schneiker-Bekel S."/>
            <person name="Szczepanowski R."/>
            <person name="Vinardell J.M."/>
            <person name="Zehner S."/>
            <person name="Gottfert M."/>
        </authorList>
    </citation>
    <scope>NUCLEOTIDE SEQUENCE [LARGE SCALE GENOMIC DNA]</scope>
    <source>
        <strain>HH103</strain>
    </source>
</reference>
<geneLocation type="plasmid">
    <name>pSfHH103d</name>
</geneLocation>
<keyword id="KW-0456">Lyase</keyword>
<keyword id="KW-0521">NADP</keyword>
<keyword id="KW-0536">Nodulation</keyword>
<keyword id="KW-0614">Plasmid</keyword>
<feature type="chain" id="PRO_0000201720" description="GDP-mannose 4,6-dehydratase">
    <location>
        <begin position="1"/>
        <end position="351"/>
    </location>
</feature>
<feature type="active site" evidence="1">
    <location>
        <position position="135"/>
    </location>
</feature>
<feature type="active site" description="Nucleophile" evidence="1">
    <location>
        <position position="137"/>
    </location>
</feature>
<feature type="active site" description="Nucleophile" evidence="1">
    <location>
        <position position="159"/>
    </location>
</feature>
<feature type="binding site" evidence="1">
    <location>
        <begin position="11"/>
        <end position="16"/>
    </location>
    <ligand>
        <name>NADP(+)</name>
        <dbReference type="ChEBI" id="CHEBI:58349"/>
    </ligand>
</feature>
<feature type="binding site" evidence="1">
    <location>
        <begin position="66"/>
        <end position="67"/>
    </location>
    <ligand>
        <name>NADP(+)</name>
        <dbReference type="ChEBI" id="CHEBI:58349"/>
    </ligand>
</feature>
<feature type="binding site" evidence="1">
    <location>
        <begin position="88"/>
        <end position="92"/>
    </location>
    <ligand>
        <name>NADP(+)</name>
        <dbReference type="ChEBI" id="CHEBI:58349"/>
    </ligand>
</feature>
<feature type="binding site" evidence="1">
    <location>
        <position position="103"/>
    </location>
    <ligand>
        <name>NADP(+)</name>
        <dbReference type="ChEBI" id="CHEBI:58349"/>
    </ligand>
</feature>
<feature type="binding site" evidence="1">
    <location>
        <position position="163"/>
    </location>
    <ligand>
        <name>NADP(+)</name>
        <dbReference type="ChEBI" id="CHEBI:58349"/>
    </ligand>
</feature>
<feature type="binding site" evidence="1">
    <location>
        <position position="189"/>
    </location>
    <ligand>
        <name>NADP(+)</name>
        <dbReference type="ChEBI" id="CHEBI:58349"/>
    </ligand>
</feature>
<feature type="binding site" evidence="1">
    <location>
        <position position="194"/>
    </location>
    <ligand>
        <name>NADP(+)</name>
        <dbReference type="ChEBI" id="CHEBI:58349"/>
    </ligand>
</feature>
<sequence length="351" mass="40014">MTDRKVALISGVTGQDGAYLAELLLDEGYIVHGIKRRSSSFNTQRIEHIYQERHDPEARFFLHYGDMTDSTNLLRIVQQTQPHEIYNLAAQSHVQVSFETPEYTANADAIGTLRMLEAIRILGLIHRTRFYQASTSELYGLAQEIPQNEKTPFYPRSPYAAAKLYAYWIVVNYREAYGMHASNGILFNHESPLRGETFVTRKITRAAAAISLGKQEVLYLGNLDAQRDWGHAREYVRGMWMMCQQDRPGDYVLATGVTTSVRTFVEWAFEETGMTIEWVGEGIEERGIDAATGKCVVAVDPRYFRPTEVDLLLGDATKARQVLGWRHETSVRDLACEMVREDLSYLRGTRQ</sequence>
<name>GM4D_SINF1</name>
<proteinExistence type="inferred from homology"/>
<organism>
    <name type="scientific">Sinorhizobium fredii (strain HH103)</name>
    <dbReference type="NCBI Taxonomy" id="1117943"/>
    <lineage>
        <taxon>Bacteria</taxon>
        <taxon>Pseudomonadati</taxon>
        <taxon>Pseudomonadota</taxon>
        <taxon>Alphaproteobacteria</taxon>
        <taxon>Hyphomicrobiales</taxon>
        <taxon>Rhizobiaceae</taxon>
        <taxon>Sinorhizobium/Ensifer group</taxon>
        <taxon>Sinorhizobium</taxon>
    </lineage>
</organism>
<protein>
    <recommendedName>
        <fullName evidence="1">GDP-mannose 4,6-dehydratase</fullName>
        <ecNumber evidence="1">4.2.1.47</ecNumber>
    </recommendedName>
    <alternativeName>
        <fullName evidence="1">GDP-D-mannose dehydratase</fullName>
    </alternativeName>
</protein>
<dbReference type="EC" id="4.2.1.47" evidence="1"/>
<dbReference type="EMBL" id="AF072888">
    <property type="protein sequence ID" value="AAC27750.1"/>
    <property type="molecule type" value="Genomic_DNA"/>
</dbReference>
<dbReference type="EMBL" id="HE616895">
    <property type="protein sequence ID" value="CCE98752.1"/>
    <property type="molecule type" value="Genomic_DNA"/>
</dbReference>
<dbReference type="RefSeq" id="WP_014857595.1">
    <property type="nucleotide sequence ID" value="NT_187147.1"/>
</dbReference>
<dbReference type="SMR" id="O85713"/>
<dbReference type="GeneID" id="48977684"/>
<dbReference type="HOGENOM" id="CLU_007383_14_0_5"/>
<dbReference type="UniPathway" id="UPA00128">
    <property type="reaction ID" value="UER00190"/>
</dbReference>
<dbReference type="GO" id="GO:0008446">
    <property type="term" value="F:GDP-mannose 4,6-dehydratase activity"/>
    <property type="evidence" value="ECO:0007669"/>
    <property type="project" value="UniProtKB-UniRule"/>
</dbReference>
<dbReference type="GO" id="GO:0070401">
    <property type="term" value="F:NADP+ binding"/>
    <property type="evidence" value="ECO:0007669"/>
    <property type="project" value="UniProtKB-UniRule"/>
</dbReference>
<dbReference type="GO" id="GO:0042351">
    <property type="term" value="P:'de novo' GDP-L-fucose biosynthetic process"/>
    <property type="evidence" value="ECO:0007669"/>
    <property type="project" value="UniProtKB-UniPathway"/>
</dbReference>
<dbReference type="CDD" id="cd05260">
    <property type="entry name" value="GDP_MD_SDR_e"/>
    <property type="match status" value="1"/>
</dbReference>
<dbReference type="FunFam" id="3.40.50.720:FF:000924">
    <property type="entry name" value="GDP-mannose 4,6 dehydratase"/>
    <property type="match status" value="1"/>
</dbReference>
<dbReference type="Gene3D" id="3.40.50.720">
    <property type="entry name" value="NAD(P)-binding Rossmann-like Domain"/>
    <property type="match status" value="1"/>
</dbReference>
<dbReference type="Gene3D" id="3.90.25.10">
    <property type="entry name" value="UDP-galactose 4-epimerase, domain 1"/>
    <property type="match status" value="1"/>
</dbReference>
<dbReference type="HAMAP" id="MF_00955">
    <property type="entry name" value="GDP_Man_dehydratase"/>
    <property type="match status" value="1"/>
</dbReference>
<dbReference type="InterPro" id="IPR006368">
    <property type="entry name" value="GDP_Man_deHydtase"/>
</dbReference>
<dbReference type="InterPro" id="IPR016040">
    <property type="entry name" value="NAD(P)-bd_dom"/>
</dbReference>
<dbReference type="InterPro" id="IPR036291">
    <property type="entry name" value="NAD(P)-bd_dom_sf"/>
</dbReference>
<dbReference type="NCBIfam" id="TIGR01472">
    <property type="entry name" value="gmd"/>
    <property type="match status" value="1"/>
</dbReference>
<dbReference type="PANTHER" id="PTHR43715:SF1">
    <property type="entry name" value="GDP-MANNOSE 4,6 DEHYDRATASE"/>
    <property type="match status" value="1"/>
</dbReference>
<dbReference type="PANTHER" id="PTHR43715">
    <property type="entry name" value="GDP-MANNOSE 4,6-DEHYDRATASE"/>
    <property type="match status" value="1"/>
</dbReference>
<dbReference type="Pfam" id="PF16363">
    <property type="entry name" value="GDP_Man_Dehyd"/>
    <property type="match status" value="1"/>
</dbReference>
<dbReference type="SUPFAM" id="SSF51735">
    <property type="entry name" value="NAD(P)-binding Rossmann-fold domains"/>
    <property type="match status" value="1"/>
</dbReference>
<evidence type="ECO:0000255" key="1">
    <source>
        <dbReference type="HAMAP-Rule" id="MF_00955"/>
    </source>
</evidence>
<comment type="function">
    <text evidence="1">Catalyzes the conversion of GDP-D-mannose to GDP-4-dehydro-6-deoxy-D-mannose.</text>
</comment>
<comment type="catalytic activity">
    <reaction evidence="1">
        <text>GDP-alpha-D-mannose = GDP-4-dehydro-alpha-D-rhamnose + H2O</text>
        <dbReference type="Rhea" id="RHEA:23820"/>
        <dbReference type="ChEBI" id="CHEBI:15377"/>
        <dbReference type="ChEBI" id="CHEBI:57527"/>
        <dbReference type="ChEBI" id="CHEBI:57964"/>
        <dbReference type="EC" id="4.2.1.47"/>
    </reaction>
</comment>
<comment type="cofactor">
    <cofactor evidence="1">
        <name>NADP(+)</name>
        <dbReference type="ChEBI" id="CHEBI:58349"/>
    </cofactor>
</comment>
<comment type="pathway">
    <text>Nucleotide-sugar biosynthesis; GDP-L-fucose biosynthesis via de novo pathway; GDP-L-fucose from GDP-alpha-D-mannose: step 1/2.</text>
</comment>
<comment type="similarity">
    <text evidence="1">Belongs to the NAD(P)-dependent epimerase/dehydratase family. GDP-mannose 4,6-dehydratase subfamily.</text>
</comment>
<gene>
    <name evidence="1" type="primary">gmd</name>
    <name type="synonym">noeL</name>
    <name type="ordered locus">SFHH103_04266</name>
</gene>
<accession>O85713</accession>
<accession>G9ACH2</accession>